<gene>
    <name evidence="12" type="primary">prx4</name>
    <name evidence="13" type="synonym">ORF4</name>
</gene>
<name>PRX4_PENRO</name>
<keyword id="KW-0325">Glycoprotein</keyword>
<keyword id="KW-0472">Membrane</keyword>
<keyword id="KW-0521">NADP</keyword>
<keyword id="KW-0560">Oxidoreductase</keyword>
<keyword id="KW-0812">Transmembrane</keyword>
<keyword id="KW-1133">Transmembrane helix</keyword>
<protein>
    <recommendedName>
        <fullName evidence="12">Short-chain dehydrogenase/reductase prx4</fullName>
        <ecNumber evidence="15">1.1.99.-</ecNumber>
    </recommendedName>
    <alternativeName>
        <fullName evidence="12">PR-toxin biosynthesis cluster protein 4</fullName>
    </alternativeName>
</protein>
<accession>A0A023I4C8</accession>
<comment type="function">
    <text evidence="6 7 8 9 10 11">Short-chain dehydrogenase/reductase; part of the gene cluster that mediates the biosynthesis of PR-toxin, a bicyclic sesquiterpene belonging to the eremophilane class and acting as a mycotoxin (PubMed:24239699, PubMed:27921136). The first step of the pathway is catalyzed by the aristolochene synthase which performs the cyclization of trans,trans-farnesyl diphosphate (FPP) to the bicyclic sesquiterpene aristolochene (PubMed:15186158, PubMed:24239699, PubMed:8440737). Following the formation of aristolochene, the non-oxygenated aristolochene is converted to the trioxygenated intermediate eremofortin B, via 7-epi-neopetasone (PubMed:24239699, PubMed:26274339). This conversion appears to involve three enzymes, a hydroxysterol oxidase-like enzyme, the quinone-oxidase prx3 that forms the quinone-type-structure in the bicyclic nucleus of aristolochene with the C8-oxo group and the C-3 hydroxyl group, and the P450 monooxygenase ORF6 that introduces the epoxide at the double bond between carbons 1 and 2 (PubMed:24239699, PubMed:27921136). No monoxy or dioxy-intermediates have been reported to be released to the broth, so these three early oxidative reactions may be coupled together (PubMed:24239699). Eremofortin B is further oxidized by another P450 monooxygenase, that introduces a second epoxide between carbons 7 and 11 prior to acetylation to eremofortin A by the acetyltransferase ORF8 (PubMed:16345540, PubMed:24239699, PubMed:27921136). The second epoxidation may be performed by a second P450 monooxygenase (PubMed:24239699). After the acetylation step, eremofortin A is converted to eremofortin C and then to PR-toxin (PubMed:24239699). First the conversion of eremofortin A to eremofortin C proceeds by oxidation of the side chain of the molecule at C-12 and is catalyzed by the short-chain oxidoreductase prx1 (PubMed:16345540, PubMed:24239699). The cytochrome P450 monooxygenase ORF6 is probably also involved in this step (PubMed:27921136). The primary alcohol formed at C-12 is finally oxidized by the short-chain alcohol dehydrogenase prx4 that forms PR-toxin (PubMed:16345540, PubMed:24239699).</text>
</comment>
<comment type="pathway">
    <text evidence="8 16">Sesquiterpene biosynthesis.</text>
</comment>
<comment type="subcellular location">
    <subcellularLocation>
        <location evidence="3">Membrane</location>
        <topology evidence="3">Single-pass membrane protein</topology>
    </subcellularLocation>
</comment>
<comment type="disruption phenotype">
    <text evidence="8">Reduces the production of PR-toxin and leads to a large increase in mycophenolic acid production.</text>
</comment>
<comment type="similarity">
    <text evidence="14">Belongs to the short-chain dehydrogenases/reductases (SDR) family.</text>
</comment>
<evidence type="ECO:0000250" key="1">
    <source>
        <dbReference type="UniProtKB" id="L0E2Z4"/>
    </source>
</evidence>
<evidence type="ECO:0000250" key="2">
    <source>
        <dbReference type="UniProtKB" id="O93868"/>
    </source>
</evidence>
<evidence type="ECO:0000255" key="3"/>
<evidence type="ECO:0000255" key="4">
    <source>
        <dbReference type="PROSITE-ProRule" id="PRU00498"/>
    </source>
</evidence>
<evidence type="ECO:0000255" key="5">
    <source>
        <dbReference type="PROSITE-ProRule" id="PRU10001"/>
    </source>
</evidence>
<evidence type="ECO:0000269" key="6">
    <source>
    </source>
</evidence>
<evidence type="ECO:0000269" key="7">
    <source>
    </source>
</evidence>
<evidence type="ECO:0000269" key="8">
    <source>
    </source>
</evidence>
<evidence type="ECO:0000269" key="9">
    <source>
    </source>
</evidence>
<evidence type="ECO:0000269" key="10">
    <source>
    </source>
</evidence>
<evidence type="ECO:0000269" key="11">
    <source>
    </source>
</evidence>
<evidence type="ECO:0000303" key="12">
    <source>
    </source>
</evidence>
<evidence type="ECO:0000303" key="13">
    <source>
    </source>
</evidence>
<evidence type="ECO:0000305" key="14"/>
<evidence type="ECO:0000305" key="15">
    <source>
    </source>
</evidence>
<evidence type="ECO:0000305" key="16">
    <source>
    </source>
</evidence>
<organism>
    <name type="scientific">Penicillium roqueforti</name>
    <dbReference type="NCBI Taxonomy" id="5082"/>
    <lineage>
        <taxon>Eukaryota</taxon>
        <taxon>Fungi</taxon>
        <taxon>Dikarya</taxon>
        <taxon>Ascomycota</taxon>
        <taxon>Pezizomycotina</taxon>
        <taxon>Eurotiomycetes</taxon>
        <taxon>Eurotiomycetidae</taxon>
        <taxon>Eurotiales</taxon>
        <taxon>Aspergillaceae</taxon>
        <taxon>Penicillium</taxon>
    </lineage>
</organism>
<feature type="chain" id="PRO_0000451216" description="Short-chain dehydrogenase/reductase prx4">
    <location>
        <begin position="1"/>
        <end position="329"/>
    </location>
</feature>
<feature type="transmembrane region" description="Helical" evidence="3">
    <location>
        <begin position="238"/>
        <end position="258"/>
    </location>
</feature>
<feature type="active site" description="Proton acceptor" evidence="5">
    <location>
        <position position="194"/>
    </location>
</feature>
<feature type="active site" description="Lowers pKa of active site Tyr" evidence="2">
    <location>
        <position position="198"/>
    </location>
</feature>
<feature type="binding site" evidence="1">
    <location>
        <position position="58"/>
    </location>
    <ligand>
        <name>NADP(+)</name>
        <dbReference type="ChEBI" id="CHEBI:58349"/>
    </ligand>
</feature>
<feature type="binding site" evidence="1">
    <location>
        <position position="60"/>
    </location>
    <ligand>
        <name>NADP(+)</name>
        <dbReference type="ChEBI" id="CHEBI:58349"/>
    </ligand>
</feature>
<feature type="binding site" evidence="1">
    <location>
        <position position="81"/>
    </location>
    <ligand>
        <name>NADP(+)</name>
        <dbReference type="ChEBI" id="CHEBI:58349"/>
    </ligand>
</feature>
<feature type="binding site" evidence="1">
    <location>
        <position position="98"/>
    </location>
    <ligand>
        <name>NADP(+)</name>
        <dbReference type="ChEBI" id="CHEBI:58349"/>
    </ligand>
</feature>
<feature type="binding site" evidence="2">
    <location>
        <position position="121"/>
    </location>
    <ligand>
        <name>NADP(+)</name>
        <dbReference type="ChEBI" id="CHEBI:58349"/>
    </ligand>
</feature>
<feature type="binding site" evidence="1">
    <location>
        <position position="161"/>
    </location>
    <ligand>
        <name>NADP(+)</name>
        <dbReference type="ChEBI" id="CHEBI:58349"/>
    </ligand>
</feature>
<feature type="binding site" evidence="2">
    <location>
        <position position="194"/>
    </location>
    <ligand>
        <name>NADP(+)</name>
        <dbReference type="ChEBI" id="CHEBI:58349"/>
    </ligand>
</feature>
<feature type="binding site" evidence="2">
    <location>
        <position position="198"/>
    </location>
    <ligand>
        <name>NADP(+)</name>
        <dbReference type="ChEBI" id="CHEBI:58349"/>
    </ligand>
</feature>
<feature type="binding site" evidence="1">
    <location>
        <position position="229"/>
    </location>
    <ligand>
        <name>NADP(+)</name>
        <dbReference type="ChEBI" id="CHEBI:58349"/>
    </ligand>
</feature>
<feature type="glycosylation site" description="N-linked (GlcNAc...) asparagine" evidence="4">
    <location>
        <position position="91"/>
    </location>
</feature>
<dbReference type="EC" id="1.1.99.-" evidence="15"/>
<dbReference type="EMBL" id="KC013363">
    <property type="protein sequence ID" value="AGS83385.1"/>
    <property type="molecule type" value="Genomic_DNA"/>
</dbReference>
<dbReference type="SMR" id="A0A023I4C8"/>
<dbReference type="GlyCosmos" id="A0A023I4C8">
    <property type="glycosylation" value="1 site, No reported glycans"/>
</dbReference>
<dbReference type="GO" id="GO:0016020">
    <property type="term" value="C:membrane"/>
    <property type="evidence" value="ECO:0007669"/>
    <property type="project" value="UniProtKB-SubCell"/>
</dbReference>
<dbReference type="GO" id="GO:0016491">
    <property type="term" value="F:oxidoreductase activity"/>
    <property type="evidence" value="ECO:0007669"/>
    <property type="project" value="UniProtKB-KW"/>
</dbReference>
<dbReference type="Gene3D" id="3.40.50.720">
    <property type="entry name" value="NAD(P)-binding Rossmann-like Domain"/>
    <property type="match status" value="1"/>
</dbReference>
<dbReference type="InterPro" id="IPR036291">
    <property type="entry name" value="NAD(P)-bd_dom_sf"/>
</dbReference>
<dbReference type="InterPro" id="IPR002347">
    <property type="entry name" value="SDR_fam"/>
</dbReference>
<dbReference type="PANTHER" id="PTHR43180">
    <property type="entry name" value="3-OXOACYL-(ACYL-CARRIER-PROTEIN) REDUCTASE (AFU_ORTHOLOGUE AFUA_6G11210)"/>
    <property type="match status" value="1"/>
</dbReference>
<dbReference type="PANTHER" id="PTHR43180:SF80">
    <property type="entry name" value="NAD(P)-BINDING PROTEIN"/>
    <property type="match status" value="1"/>
</dbReference>
<dbReference type="Pfam" id="PF00106">
    <property type="entry name" value="adh_short"/>
    <property type="match status" value="1"/>
</dbReference>
<dbReference type="PRINTS" id="PR00081">
    <property type="entry name" value="GDHRDH"/>
</dbReference>
<dbReference type="PRINTS" id="PR00080">
    <property type="entry name" value="SDRFAMILY"/>
</dbReference>
<dbReference type="SUPFAM" id="SSF51735">
    <property type="entry name" value="NAD(P)-binding Rossmann-fold domains"/>
    <property type="match status" value="1"/>
</dbReference>
<reference key="1">
    <citation type="journal article" date="2014" name="Fungal Genet. Biol.">
        <title>Molecular characterization of the PR-toxin gene cluster in Penicillium roqueforti and Penicillium chrysogenum: cross talk of secondary metabolite pathways.</title>
        <authorList>
            <person name="Hidalgo P.I."/>
            <person name="Ullan R.V."/>
            <person name="Albillos S.M."/>
            <person name="Montero O."/>
            <person name="Fernandez-Bodega M.A."/>
            <person name="Garcia-Estrada C."/>
            <person name="Fernandez-Aguado M."/>
            <person name="Martin J.F."/>
        </authorList>
    </citation>
    <scope>NUCLEOTIDE SEQUENCE [GENOMIC DNA]</scope>
    <scope>FUNCTION</scope>
    <scope>DISRUPTION PHENOTYPE</scope>
    <scope>PATHWAY</scope>
    <source>
        <strain>CECT 2905</strain>
    </source>
</reference>
<reference key="2">
    <citation type="journal article" date="1980" name="Appl. Environ. Microbiol.">
        <title>Production of eremofortins A, B, and C relative to formation of PR toxin by Penicillium roqueforti.</title>
        <authorList>
            <person name="Moreau S."/>
            <person name="Lablache-Combier A."/>
            <person name="Biguet J."/>
        </authorList>
    </citation>
    <scope>FUNCTION</scope>
</reference>
<reference key="3">
    <citation type="journal article" date="1993" name="J. Biol. Chem.">
        <title>Aristolochene synthase. Isolation, characterization, and bacterial expression of a sesquiterpenoid biosynthetic gene (Ari1) from Penicillium roqueforti.</title>
        <authorList>
            <person name="Proctor R.H."/>
            <person name="Hohn T.M."/>
        </authorList>
    </citation>
    <scope>FUNCTION</scope>
</reference>
<reference key="4">
    <citation type="journal article" date="2004" name="J. Am. Chem. Soc.">
        <title>Aristolochene synthase: mechanistic analysis of active site residues by site-directed mutagenesis.</title>
        <authorList>
            <person name="Felicetti B."/>
            <person name="Cane D.E."/>
        </authorList>
    </citation>
    <scope>FUNCTION</scope>
</reference>
<reference key="5">
    <citation type="journal article" date="2015" name="Angew. Chem. Int. Ed.">
        <title>Identification of intermediates in the biosynthesis of PR toxin by Penicillium roqueforti.</title>
        <authorList>
            <person name="Riclea R."/>
            <person name="Dickschat J.S."/>
        </authorList>
    </citation>
    <scope>FUNCTION</scope>
</reference>
<reference key="6">
    <citation type="journal article" date="2017" name="Appl. Microbiol. Biotechnol.">
        <title>Penicillium roqueforti PR toxin gene cluster characterization.</title>
        <authorList>
            <person name="Hidalgo P.I."/>
            <person name="Poirier E."/>
            <person name="Ullan R.V."/>
            <person name="Piqueras J."/>
            <person name="Meslet-Cladiere L."/>
            <person name="Coton E."/>
            <person name="Coton M."/>
        </authorList>
    </citation>
    <scope>FUNCTION</scope>
    <scope>PATHWAY</scope>
</reference>
<proteinExistence type="inferred from homology"/>
<sequence length="329" mass="35536">MIPRWQPASIPLLLHLDTLRCHHVSVQPPRATMTSLNIKEEDIPRLDGKVVVISGGASGIGLAAANIFARAGAKIFLFDCNPPDSGEAPENSTFIKADITSWAELKAAFAQAGHVDIAVANAGVSEEQPYFEDTFDEQGELKEPGFAVVDVNFKGTVMFTKLAVSYMRKQGKGGSVVITASATGYAPEQNLPVYSAIKSGLVGLVRSLRSTLPRFDISINAVAPAATITKLLPMDIAGPLMAAGLPVSSAHMVGLAVVYSAVARQPRMVETYGKENVLDLESKWNGRTILTLGEHYTELEEKLADLRPVWFGWRNTDLTKKQQATADFR</sequence>